<reference key="1">
    <citation type="journal article" date="1995" name="J. Mol. Biol.">
        <title>The mitochondrial DNA of the amoeboid protozoon, Acanthamoeba castellanii: complete sequence, gene content and genome organization.</title>
        <authorList>
            <person name="Burger G."/>
            <person name="Plante I."/>
            <person name="Lonergan K.M."/>
            <person name="Gray M.W."/>
        </authorList>
    </citation>
    <scope>NUCLEOTIDE SEQUENCE [GENOMIC DNA]</scope>
    <source>
        <strain>ATCC 30010 / Neff</strain>
    </source>
</reference>
<comment type="function">
    <text evidence="1">Core subunit of the mitochondrial membrane respiratory chain NADH dehydrogenase (Complex I) that is believed to belong to the minimal assembly required for catalysis. Complex I functions in the transfer of electrons from NADH to the respiratory chain. The immediate electron acceptor for the enzyme is believed to be ubiquinone (By similarity).</text>
</comment>
<comment type="catalytic activity">
    <reaction>
        <text>a ubiquinone + NADH + 5 H(+)(in) = a ubiquinol + NAD(+) + 4 H(+)(out)</text>
        <dbReference type="Rhea" id="RHEA:29091"/>
        <dbReference type="Rhea" id="RHEA-COMP:9565"/>
        <dbReference type="Rhea" id="RHEA-COMP:9566"/>
        <dbReference type="ChEBI" id="CHEBI:15378"/>
        <dbReference type="ChEBI" id="CHEBI:16389"/>
        <dbReference type="ChEBI" id="CHEBI:17976"/>
        <dbReference type="ChEBI" id="CHEBI:57540"/>
        <dbReference type="ChEBI" id="CHEBI:57945"/>
        <dbReference type="EC" id="7.1.1.2"/>
    </reaction>
</comment>
<comment type="subcellular location">
    <subcellularLocation>
        <location evidence="1">Mitochondrion membrane</location>
        <topology evidence="1">Multi-pass membrane protein</topology>
    </subcellularLocation>
</comment>
<comment type="similarity">
    <text evidence="3">Belongs to the complex I subunit 4L family.</text>
</comment>
<sequence>MTSFNIFFLLFFSFVIFFLGILGIFITRKNIIIILVSIELMLLAVNFNFAIFSVLLEDMFGQVFILYTLTLAGAEAAIGLAILIIFYRIRGIISVNFVTSLKG</sequence>
<proteinExistence type="inferred from homology"/>
<evidence type="ECO:0000250" key="1"/>
<evidence type="ECO:0000255" key="2"/>
<evidence type="ECO:0000305" key="3"/>
<name>NU4LM_ACACA</name>
<organism>
    <name type="scientific">Acanthamoeba castellanii</name>
    <name type="common">Amoeba</name>
    <dbReference type="NCBI Taxonomy" id="5755"/>
    <lineage>
        <taxon>Eukaryota</taxon>
        <taxon>Amoebozoa</taxon>
        <taxon>Discosea</taxon>
        <taxon>Longamoebia</taxon>
        <taxon>Centramoebida</taxon>
        <taxon>Acanthamoebidae</taxon>
        <taxon>Acanthamoeba</taxon>
    </lineage>
</organism>
<feature type="chain" id="PRO_0000118380" description="NADH-ubiquinone oxidoreductase chain 4L">
    <location>
        <begin position="1"/>
        <end position="103"/>
    </location>
</feature>
<feature type="transmembrane region" description="Helical" evidence="2">
    <location>
        <begin position="6"/>
        <end position="26"/>
    </location>
</feature>
<feature type="transmembrane region" description="Helical" evidence="2">
    <location>
        <begin position="31"/>
        <end position="51"/>
    </location>
</feature>
<feature type="transmembrane region" description="Helical" evidence="2">
    <location>
        <begin position="65"/>
        <end position="85"/>
    </location>
</feature>
<protein>
    <recommendedName>
        <fullName>NADH-ubiquinone oxidoreductase chain 4L</fullName>
        <ecNumber>7.1.1.2</ecNumber>
    </recommendedName>
    <alternativeName>
        <fullName>NADH dehydrogenase subunit 4L</fullName>
    </alternativeName>
</protein>
<keyword id="KW-0249">Electron transport</keyword>
<keyword id="KW-0472">Membrane</keyword>
<keyword id="KW-0496">Mitochondrion</keyword>
<keyword id="KW-0520">NAD</keyword>
<keyword id="KW-0679">Respiratory chain</keyword>
<keyword id="KW-1278">Translocase</keyword>
<keyword id="KW-0812">Transmembrane</keyword>
<keyword id="KW-1133">Transmembrane helix</keyword>
<keyword id="KW-0813">Transport</keyword>
<keyword id="KW-0830">Ubiquinone</keyword>
<dbReference type="EC" id="7.1.1.2"/>
<dbReference type="EMBL" id="U12386">
    <property type="protein sequence ID" value="AAD11831.1"/>
    <property type="molecule type" value="Genomic_DNA"/>
</dbReference>
<dbReference type="PIR" id="S53839">
    <property type="entry name" value="S53839"/>
</dbReference>
<dbReference type="RefSeq" id="NP_042538.1">
    <property type="nucleotide sequence ID" value="NC_001637.1"/>
</dbReference>
<dbReference type="SMR" id="Q37379"/>
<dbReference type="GeneID" id="1734036"/>
<dbReference type="GO" id="GO:0031966">
    <property type="term" value="C:mitochondrial membrane"/>
    <property type="evidence" value="ECO:0007669"/>
    <property type="project" value="UniProtKB-SubCell"/>
</dbReference>
<dbReference type="GO" id="GO:0030964">
    <property type="term" value="C:NADH dehydrogenase complex"/>
    <property type="evidence" value="ECO:0007669"/>
    <property type="project" value="TreeGrafter"/>
</dbReference>
<dbReference type="GO" id="GO:0008137">
    <property type="term" value="F:NADH dehydrogenase (ubiquinone) activity"/>
    <property type="evidence" value="ECO:0007669"/>
    <property type="project" value="UniProtKB-EC"/>
</dbReference>
<dbReference type="GO" id="GO:0042773">
    <property type="term" value="P:ATP synthesis coupled electron transport"/>
    <property type="evidence" value="ECO:0007669"/>
    <property type="project" value="InterPro"/>
</dbReference>
<dbReference type="Gene3D" id="1.10.287.3510">
    <property type="match status" value="1"/>
</dbReference>
<dbReference type="HAMAP" id="MF_01456">
    <property type="entry name" value="NDH1_NuoK"/>
    <property type="match status" value="1"/>
</dbReference>
<dbReference type="InterPro" id="IPR001133">
    <property type="entry name" value="NADH_UbQ_OxRdtase_chain4L/K"/>
</dbReference>
<dbReference type="InterPro" id="IPR039428">
    <property type="entry name" value="NUOK/Mnh_C1-like"/>
</dbReference>
<dbReference type="NCBIfam" id="NF004320">
    <property type="entry name" value="PRK05715.1-2"/>
    <property type="match status" value="1"/>
</dbReference>
<dbReference type="NCBIfam" id="NF004321">
    <property type="entry name" value="PRK05715.1-3"/>
    <property type="match status" value="1"/>
</dbReference>
<dbReference type="NCBIfam" id="NF004323">
    <property type="entry name" value="PRK05715.1-5"/>
    <property type="match status" value="1"/>
</dbReference>
<dbReference type="PANTHER" id="PTHR11434:SF21">
    <property type="entry name" value="NADH DEHYDROGENASE SUBUNIT 4L-RELATED"/>
    <property type="match status" value="1"/>
</dbReference>
<dbReference type="PANTHER" id="PTHR11434">
    <property type="entry name" value="NADH-UBIQUINONE OXIDOREDUCTASE SUBUNIT ND4L"/>
    <property type="match status" value="1"/>
</dbReference>
<dbReference type="Pfam" id="PF00420">
    <property type="entry name" value="Oxidored_q2"/>
    <property type="match status" value="1"/>
</dbReference>
<gene>
    <name type="primary">ND4L</name>
    <name type="synonym">NAD4L</name>
</gene>
<accession>Q37379</accession>
<geneLocation type="mitochondrion"/>